<accession>B3WF81</accession>
<sequence length="228" mass="25709">MEMERINANTIRVMLGNDDLAQRGITVLDLLGNHKQIESFFYSILDEVDKDHTFATNEAVTFQVMPSQSGLELLISRSGQKNDDSAADQTDDEGTDTQVPDYIRQQLQGLDASDQQDHQAVDEGGYIDADKAPQTELVLKLKDFEDFISLADTLRLEGGKSDLYRYKNAYYLVLTFYPNEISSDEAHDQMAVAMEFGDRSPLSSAVLSEYGKRLMETSALETARYYFK</sequence>
<comment type="function">
    <text evidence="1">Enables the recognition and targeting of unfolded and aggregated proteins to the ClpC protease or to other proteins involved in proteolysis.</text>
</comment>
<comment type="subunit">
    <text evidence="1">Homodimer.</text>
</comment>
<comment type="domain">
    <text>The N-terminal domain probably binds unfolded/aggregated proteins; the C-terminal domain interacts with ClpC.</text>
</comment>
<comment type="similarity">
    <text evidence="1">Belongs to the MecA family.</text>
</comment>
<name>MECA_LACCB</name>
<feature type="chain" id="PRO_1000137281" description="Adapter protein MecA">
    <location>
        <begin position="1"/>
        <end position="228"/>
    </location>
</feature>
<feature type="region of interest" description="Disordered" evidence="2">
    <location>
        <begin position="79"/>
        <end position="98"/>
    </location>
</feature>
<feature type="compositionally biased region" description="Acidic residues" evidence="2">
    <location>
        <begin position="85"/>
        <end position="95"/>
    </location>
</feature>
<reference key="1">
    <citation type="submission" date="2008-06" db="EMBL/GenBank/DDBJ databases">
        <title>Lactobacillus casei BL23 complete genome sequence.</title>
        <authorList>
            <person name="Maze A."/>
            <person name="Boel G."/>
            <person name="Bourand A."/>
            <person name="Loux V."/>
            <person name="Gibrat J.F."/>
            <person name="Zuniga M."/>
            <person name="Hartke A."/>
            <person name="Deutscher J."/>
        </authorList>
    </citation>
    <scope>NUCLEOTIDE SEQUENCE [LARGE SCALE GENOMIC DNA]</scope>
    <source>
        <strain>BL23</strain>
    </source>
</reference>
<protein>
    <recommendedName>
        <fullName evidence="1">Adapter protein MecA</fullName>
    </recommendedName>
</protein>
<organism>
    <name type="scientific">Lacticaseibacillus casei (strain BL23)</name>
    <name type="common">Lactobacillus casei</name>
    <dbReference type="NCBI Taxonomy" id="543734"/>
    <lineage>
        <taxon>Bacteria</taxon>
        <taxon>Bacillati</taxon>
        <taxon>Bacillota</taxon>
        <taxon>Bacilli</taxon>
        <taxon>Lactobacillales</taxon>
        <taxon>Lactobacillaceae</taxon>
        <taxon>Lacticaseibacillus</taxon>
    </lineage>
</organism>
<dbReference type="EMBL" id="FM177140">
    <property type="protein sequence ID" value="CAQ67032.1"/>
    <property type="molecule type" value="Genomic_DNA"/>
</dbReference>
<dbReference type="SMR" id="B3WF81"/>
<dbReference type="KEGG" id="lcb:LCABL_19540"/>
<dbReference type="HOGENOM" id="CLU_071496_2_0_9"/>
<dbReference type="GO" id="GO:0030674">
    <property type="term" value="F:protein-macromolecule adaptor activity"/>
    <property type="evidence" value="ECO:0007669"/>
    <property type="project" value="UniProtKB-UniRule"/>
</dbReference>
<dbReference type="Gene3D" id="3.30.70.1950">
    <property type="match status" value="1"/>
</dbReference>
<dbReference type="HAMAP" id="MF_01124">
    <property type="entry name" value="MecA"/>
    <property type="match status" value="1"/>
</dbReference>
<dbReference type="InterPro" id="IPR038471">
    <property type="entry name" value="MecA_C_sf"/>
</dbReference>
<dbReference type="InterPro" id="IPR008681">
    <property type="entry name" value="Neg-reg_MecA"/>
</dbReference>
<dbReference type="PANTHER" id="PTHR39161">
    <property type="entry name" value="ADAPTER PROTEIN MECA"/>
    <property type="match status" value="1"/>
</dbReference>
<dbReference type="PANTHER" id="PTHR39161:SF1">
    <property type="entry name" value="ADAPTER PROTEIN MECA 1"/>
    <property type="match status" value="1"/>
</dbReference>
<dbReference type="Pfam" id="PF05389">
    <property type="entry name" value="MecA"/>
    <property type="match status" value="1"/>
</dbReference>
<dbReference type="PIRSF" id="PIRSF029008">
    <property type="entry name" value="MecA"/>
    <property type="match status" value="1"/>
</dbReference>
<proteinExistence type="inferred from homology"/>
<gene>
    <name evidence="1" type="primary">mecA</name>
    <name type="ordered locus">LCABL_19540</name>
</gene>
<evidence type="ECO:0000255" key="1">
    <source>
        <dbReference type="HAMAP-Rule" id="MF_01124"/>
    </source>
</evidence>
<evidence type="ECO:0000256" key="2">
    <source>
        <dbReference type="SAM" id="MobiDB-lite"/>
    </source>
</evidence>